<reference key="1">
    <citation type="submission" date="2006-12" db="EMBL/GenBank/DDBJ databases">
        <authorList>
            <person name="Fouts D.E."/>
            <person name="Nelson K.E."/>
            <person name="Sebastian Y."/>
        </authorList>
    </citation>
    <scope>NUCLEOTIDE SEQUENCE [LARGE SCALE GENOMIC DNA]</scope>
    <source>
        <strain>81-176</strain>
    </source>
</reference>
<organism>
    <name type="scientific">Campylobacter jejuni subsp. jejuni serotype O:23/36 (strain 81-176)</name>
    <dbReference type="NCBI Taxonomy" id="354242"/>
    <lineage>
        <taxon>Bacteria</taxon>
        <taxon>Pseudomonadati</taxon>
        <taxon>Campylobacterota</taxon>
        <taxon>Epsilonproteobacteria</taxon>
        <taxon>Campylobacterales</taxon>
        <taxon>Campylobacteraceae</taxon>
        <taxon>Campylobacter</taxon>
    </lineage>
</organism>
<protein>
    <recommendedName>
        <fullName evidence="1">Translation initiation factor IF-1</fullName>
    </recommendedName>
</protein>
<gene>
    <name evidence="1" type="primary">infA</name>
    <name type="ordered locus">CJJ81176_1578</name>
</gene>
<dbReference type="EMBL" id="CP000538">
    <property type="protein sequence ID" value="EAQ72867.1"/>
    <property type="molecule type" value="Genomic_DNA"/>
</dbReference>
<dbReference type="RefSeq" id="WP_002781436.1">
    <property type="nucleotide sequence ID" value="NC_008787.1"/>
</dbReference>
<dbReference type="SMR" id="A1W1J2"/>
<dbReference type="GeneID" id="98394725"/>
<dbReference type="KEGG" id="cjj:CJJ81176_1578"/>
<dbReference type="eggNOG" id="COG0361">
    <property type="taxonomic scope" value="Bacteria"/>
</dbReference>
<dbReference type="HOGENOM" id="CLU_151267_1_0_7"/>
<dbReference type="Proteomes" id="UP000000646">
    <property type="component" value="Chromosome"/>
</dbReference>
<dbReference type="GO" id="GO:0005829">
    <property type="term" value="C:cytosol"/>
    <property type="evidence" value="ECO:0007669"/>
    <property type="project" value="TreeGrafter"/>
</dbReference>
<dbReference type="GO" id="GO:0043022">
    <property type="term" value="F:ribosome binding"/>
    <property type="evidence" value="ECO:0007669"/>
    <property type="project" value="UniProtKB-UniRule"/>
</dbReference>
<dbReference type="GO" id="GO:0019843">
    <property type="term" value="F:rRNA binding"/>
    <property type="evidence" value="ECO:0007669"/>
    <property type="project" value="UniProtKB-UniRule"/>
</dbReference>
<dbReference type="GO" id="GO:0003743">
    <property type="term" value="F:translation initiation factor activity"/>
    <property type="evidence" value="ECO:0007669"/>
    <property type="project" value="UniProtKB-UniRule"/>
</dbReference>
<dbReference type="CDD" id="cd04451">
    <property type="entry name" value="S1_IF1"/>
    <property type="match status" value="1"/>
</dbReference>
<dbReference type="FunFam" id="2.40.50.140:FF:000002">
    <property type="entry name" value="Translation initiation factor IF-1"/>
    <property type="match status" value="1"/>
</dbReference>
<dbReference type="Gene3D" id="2.40.50.140">
    <property type="entry name" value="Nucleic acid-binding proteins"/>
    <property type="match status" value="1"/>
</dbReference>
<dbReference type="HAMAP" id="MF_00075">
    <property type="entry name" value="IF_1"/>
    <property type="match status" value="1"/>
</dbReference>
<dbReference type="InterPro" id="IPR012340">
    <property type="entry name" value="NA-bd_OB-fold"/>
</dbReference>
<dbReference type="InterPro" id="IPR006196">
    <property type="entry name" value="RNA-binding_domain_S1_IF1"/>
</dbReference>
<dbReference type="InterPro" id="IPR003029">
    <property type="entry name" value="S1_domain"/>
</dbReference>
<dbReference type="InterPro" id="IPR004368">
    <property type="entry name" value="TIF_IF1"/>
</dbReference>
<dbReference type="NCBIfam" id="TIGR00008">
    <property type="entry name" value="infA"/>
    <property type="match status" value="1"/>
</dbReference>
<dbReference type="PANTHER" id="PTHR33370">
    <property type="entry name" value="TRANSLATION INITIATION FACTOR IF-1, CHLOROPLASTIC"/>
    <property type="match status" value="1"/>
</dbReference>
<dbReference type="PANTHER" id="PTHR33370:SF1">
    <property type="entry name" value="TRANSLATION INITIATION FACTOR IF-1, CHLOROPLASTIC"/>
    <property type="match status" value="1"/>
</dbReference>
<dbReference type="Pfam" id="PF01176">
    <property type="entry name" value="eIF-1a"/>
    <property type="match status" value="1"/>
</dbReference>
<dbReference type="SMART" id="SM00316">
    <property type="entry name" value="S1"/>
    <property type="match status" value="1"/>
</dbReference>
<dbReference type="SUPFAM" id="SSF50249">
    <property type="entry name" value="Nucleic acid-binding proteins"/>
    <property type="match status" value="1"/>
</dbReference>
<dbReference type="PROSITE" id="PS50832">
    <property type="entry name" value="S1_IF1_TYPE"/>
    <property type="match status" value="1"/>
</dbReference>
<name>IF1_CAMJJ</name>
<keyword id="KW-0963">Cytoplasm</keyword>
<keyword id="KW-0396">Initiation factor</keyword>
<keyword id="KW-0648">Protein biosynthesis</keyword>
<keyword id="KW-0694">RNA-binding</keyword>
<keyword id="KW-0699">rRNA-binding</keyword>
<comment type="function">
    <text evidence="1">One of the essential components for the initiation of protein synthesis. Stabilizes the binding of IF-2 and IF-3 on the 30S subunit to which N-formylmethionyl-tRNA(fMet) subsequently binds. Helps modulate mRNA selection, yielding the 30S pre-initiation complex (PIC). Upon addition of the 50S ribosomal subunit IF-1, IF-2 and IF-3 are released leaving the mature 70S translation initiation complex.</text>
</comment>
<comment type="subunit">
    <text evidence="1">Component of the 30S ribosomal translation pre-initiation complex which assembles on the 30S ribosome in the order IF-2 and IF-3, IF-1 and N-formylmethionyl-tRNA(fMet); mRNA recruitment can occur at any time during PIC assembly.</text>
</comment>
<comment type="subcellular location">
    <subcellularLocation>
        <location evidence="1">Cytoplasm</location>
    </subcellularLocation>
</comment>
<comment type="similarity">
    <text evidence="1">Belongs to the IF-1 family.</text>
</comment>
<feature type="chain" id="PRO_0000338795" description="Translation initiation factor IF-1">
    <location>
        <begin position="1"/>
        <end position="72"/>
    </location>
</feature>
<feature type="domain" description="S1-like" evidence="1">
    <location>
        <begin position="1"/>
        <end position="72"/>
    </location>
</feature>
<evidence type="ECO:0000255" key="1">
    <source>
        <dbReference type="HAMAP-Rule" id="MF_00075"/>
    </source>
</evidence>
<accession>A1W1J2</accession>
<proteinExistence type="inferred from homology"/>
<sequence>MAKDDVIEIDGTVLEALPNANFKVELDNKHVILCHIAGKMRMHYIRIMPGDKVKVELTPYSLDKGRITFRYK</sequence>